<name>TRMD_ACTP2</name>
<comment type="function">
    <text evidence="1">Specifically methylates guanosine-37 in various tRNAs.</text>
</comment>
<comment type="catalytic activity">
    <reaction evidence="1">
        <text>guanosine(37) in tRNA + S-adenosyl-L-methionine = N(1)-methylguanosine(37) in tRNA + S-adenosyl-L-homocysteine + H(+)</text>
        <dbReference type="Rhea" id="RHEA:36899"/>
        <dbReference type="Rhea" id="RHEA-COMP:10145"/>
        <dbReference type="Rhea" id="RHEA-COMP:10147"/>
        <dbReference type="ChEBI" id="CHEBI:15378"/>
        <dbReference type="ChEBI" id="CHEBI:57856"/>
        <dbReference type="ChEBI" id="CHEBI:59789"/>
        <dbReference type="ChEBI" id="CHEBI:73542"/>
        <dbReference type="ChEBI" id="CHEBI:74269"/>
        <dbReference type="EC" id="2.1.1.228"/>
    </reaction>
</comment>
<comment type="subunit">
    <text evidence="1">Homodimer.</text>
</comment>
<comment type="subcellular location">
    <subcellularLocation>
        <location evidence="1">Cytoplasm</location>
    </subcellularLocation>
</comment>
<comment type="similarity">
    <text evidence="1">Belongs to the RNA methyltransferase TrmD family.</text>
</comment>
<organism>
    <name type="scientific">Actinobacillus pleuropneumoniae serotype 5b (strain L20)</name>
    <dbReference type="NCBI Taxonomy" id="416269"/>
    <lineage>
        <taxon>Bacteria</taxon>
        <taxon>Pseudomonadati</taxon>
        <taxon>Pseudomonadota</taxon>
        <taxon>Gammaproteobacteria</taxon>
        <taxon>Pasteurellales</taxon>
        <taxon>Pasteurellaceae</taxon>
        <taxon>Actinobacillus</taxon>
    </lineage>
</organism>
<gene>
    <name evidence="1" type="primary">trmD</name>
    <name type="ordered locus">APL_1788</name>
</gene>
<proteinExistence type="inferred from homology"/>
<keyword id="KW-0963">Cytoplasm</keyword>
<keyword id="KW-0489">Methyltransferase</keyword>
<keyword id="KW-1185">Reference proteome</keyword>
<keyword id="KW-0949">S-adenosyl-L-methionine</keyword>
<keyword id="KW-0808">Transferase</keyword>
<keyword id="KW-0819">tRNA processing</keyword>
<feature type="chain" id="PRO_1000006443" description="tRNA (guanine-N(1)-)-methyltransferase">
    <location>
        <begin position="1"/>
        <end position="251"/>
    </location>
</feature>
<feature type="binding site" evidence="1">
    <location>
        <position position="117"/>
    </location>
    <ligand>
        <name>S-adenosyl-L-methionine</name>
        <dbReference type="ChEBI" id="CHEBI:59789"/>
    </ligand>
</feature>
<feature type="binding site" evidence="1">
    <location>
        <begin position="137"/>
        <end position="142"/>
    </location>
    <ligand>
        <name>S-adenosyl-L-methionine</name>
        <dbReference type="ChEBI" id="CHEBI:59789"/>
    </ligand>
</feature>
<reference key="1">
    <citation type="journal article" date="2008" name="J. Bacteriol.">
        <title>The complete genome sequence of Actinobacillus pleuropneumoniae L20 (serotype 5b).</title>
        <authorList>
            <person name="Foote S.J."/>
            <person name="Bosse J.T."/>
            <person name="Bouevitch A.B."/>
            <person name="Langford P.R."/>
            <person name="Young N.M."/>
            <person name="Nash J.H.E."/>
        </authorList>
    </citation>
    <scope>NUCLEOTIDE SEQUENCE [LARGE SCALE GENOMIC DNA]</scope>
    <source>
        <strain>L20</strain>
    </source>
</reference>
<accession>A3N386</accession>
<sequence>MWIGIISLFPEMFKAITDFGVTGRAVKQDLLQIQCWNPRDFTFDKHKTVDDRPYGGGPGMLMMVQPLRDAIHAAKQAAKAEDGVEAKVIYLSPQGRKLDQQGVKTLASNQKLILICGRYEGVDERLIQTEVDEEWSIGDYVLTGGELPAMTLIDAVARFVPGVLGKQASADEDSFATGLLDCPHYTRPEMLDGIPVPEVLMSGHHENIRKWRLEQSLERTWLRRPELLDSLALTDEQRVLLAKIKKQHKIS</sequence>
<protein>
    <recommendedName>
        <fullName evidence="1">tRNA (guanine-N(1)-)-methyltransferase</fullName>
        <ecNumber evidence="1">2.1.1.228</ecNumber>
    </recommendedName>
    <alternativeName>
        <fullName evidence="1">M1G-methyltransferase</fullName>
    </alternativeName>
    <alternativeName>
        <fullName evidence="1">tRNA [GM37] methyltransferase</fullName>
    </alternativeName>
</protein>
<dbReference type="EC" id="2.1.1.228" evidence="1"/>
<dbReference type="EMBL" id="CP000569">
    <property type="protein sequence ID" value="ABN74872.1"/>
    <property type="molecule type" value="Genomic_DNA"/>
</dbReference>
<dbReference type="RefSeq" id="WP_005599344.1">
    <property type="nucleotide sequence ID" value="NC_009053.1"/>
</dbReference>
<dbReference type="SMR" id="A3N386"/>
<dbReference type="STRING" id="416269.APL_1788"/>
<dbReference type="EnsemblBacteria" id="ABN74872">
    <property type="protein sequence ID" value="ABN74872"/>
    <property type="gene ID" value="APL_1788"/>
</dbReference>
<dbReference type="GeneID" id="92743626"/>
<dbReference type="KEGG" id="apl:APL_1788"/>
<dbReference type="eggNOG" id="COG0336">
    <property type="taxonomic scope" value="Bacteria"/>
</dbReference>
<dbReference type="HOGENOM" id="CLU_047363_0_1_6"/>
<dbReference type="Proteomes" id="UP000001432">
    <property type="component" value="Chromosome"/>
</dbReference>
<dbReference type="GO" id="GO:0005829">
    <property type="term" value="C:cytosol"/>
    <property type="evidence" value="ECO:0007669"/>
    <property type="project" value="TreeGrafter"/>
</dbReference>
<dbReference type="GO" id="GO:0052906">
    <property type="term" value="F:tRNA (guanine(37)-N1)-methyltransferase activity"/>
    <property type="evidence" value="ECO:0007669"/>
    <property type="project" value="UniProtKB-UniRule"/>
</dbReference>
<dbReference type="GO" id="GO:0002939">
    <property type="term" value="P:tRNA N1-guanine methylation"/>
    <property type="evidence" value="ECO:0007669"/>
    <property type="project" value="TreeGrafter"/>
</dbReference>
<dbReference type="CDD" id="cd18080">
    <property type="entry name" value="TrmD-like"/>
    <property type="match status" value="1"/>
</dbReference>
<dbReference type="FunFam" id="1.10.1270.20:FF:000001">
    <property type="entry name" value="tRNA (guanine-N(1)-)-methyltransferase"/>
    <property type="match status" value="1"/>
</dbReference>
<dbReference type="FunFam" id="3.40.1280.10:FF:000001">
    <property type="entry name" value="tRNA (guanine-N(1)-)-methyltransferase"/>
    <property type="match status" value="1"/>
</dbReference>
<dbReference type="Gene3D" id="3.40.1280.10">
    <property type="match status" value="1"/>
</dbReference>
<dbReference type="Gene3D" id="1.10.1270.20">
    <property type="entry name" value="tRNA(m1g37)methyltransferase, domain 2"/>
    <property type="match status" value="1"/>
</dbReference>
<dbReference type="HAMAP" id="MF_00605">
    <property type="entry name" value="TrmD"/>
    <property type="match status" value="1"/>
</dbReference>
<dbReference type="InterPro" id="IPR029028">
    <property type="entry name" value="Alpha/beta_knot_MTases"/>
</dbReference>
<dbReference type="InterPro" id="IPR023148">
    <property type="entry name" value="tRNA_m1G_MeTrfase_C_sf"/>
</dbReference>
<dbReference type="InterPro" id="IPR002649">
    <property type="entry name" value="tRNA_m1G_MeTrfase_TrmD"/>
</dbReference>
<dbReference type="InterPro" id="IPR029026">
    <property type="entry name" value="tRNA_m1G_MTases_N"/>
</dbReference>
<dbReference type="InterPro" id="IPR016009">
    <property type="entry name" value="tRNA_MeTrfase_TRMD/TRM10"/>
</dbReference>
<dbReference type="NCBIfam" id="NF000648">
    <property type="entry name" value="PRK00026.1"/>
    <property type="match status" value="1"/>
</dbReference>
<dbReference type="NCBIfam" id="TIGR00088">
    <property type="entry name" value="trmD"/>
    <property type="match status" value="1"/>
</dbReference>
<dbReference type="PANTHER" id="PTHR46417">
    <property type="entry name" value="TRNA (GUANINE-N(1)-)-METHYLTRANSFERASE"/>
    <property type="match status" value="1"/>
</dbReference>
<dbReference type="PANTHER" id="PTHR46417:SF1">
    <property type="entry name" value="TRNA (GUANINE-N(1)-)-METHYLTRANSFERASE"/>
    <property type="match status" value="1"/>
</dbReference>
<dbReference type="Pfam" id="PF01746">
    <property type="entry name" value="tRNA_m1G_MT"/>
    <property type="match status" value="1"/>
</dbReference>
<dbReference type="PIRSF" id="PIRSF000386">
    <property type="entry name" value="tRNA_mtase"/>
    <property type="match status" value="1"/>
</dbReference>
<dbReference type="SUPFAM" id="SSF75217">
    <property type="entry name" value="alpha/beta knot"/>
    <property type="match status" value="1"/>
</dbReference>
<evidence type="ECO:0000255" key="1">
    <source>
        <dbReference type="HAMAP-Rule" id="MF_00605"/>
    </source>
</evidence>